<proteinExistence type="inferred from homology"/>
<sequence length="691" mass="74307">MGGALSTEAQRASSVEELSQRLAHRFATKCFTPLELTHLKDNFFSRALEQRGIRYWNEEILSDFLGIPDGAGSAATATSDGSLDAGPVIFRMVSYLGAFPFQNTMAPTVLTFEAMIKVVVLLTERYGKVLKRGKKDRIKLLFGSLADVGRRDIITQLKEAAEDSLESIGVADPNGGSTFAHNGGFLIDQPINDGEDEDDDDDLALAALESLDAIEVFKQDQRIDKTVFESKISLTTFRRLLTLLIVTAPLRPLGTVSKYTTGLSKSSLDTVHEQVDSILAALGSEVAEDGIGYKSFSELISTSLPYLFDPLTPLFEHLLFSKNLNLSRKSETSNGQADKPAPTPPSTPPRSPPLSPVILTGGFDSCILNPVILSHLSFFISTSPHIPNIFRNRTHLHPVFSSTEHGESLTSFSHHVMTWQAPTILLIRGAVTSENNEEQITTIGAYIPQPWKQSSSYSSRRSSESVHPSTLPCLFEIFPVHTVLQGSPSFSSLKSNMPVSHFSTKTGIAIGCIIPPSSRKSLGSDLHPKPAGGGSLLIDSALENATFVVSDGLNGEGVFLPPGVSPSGTTTTGTTSTKTPSSTSPTASAASVSTSNHNTTKSISIYNLEVWGIIPSQSLATQSDGTGSPIEKQDAIALQRAQWNFEAREAERRQAINMKVGGGESEAQTGRALLEMAGIIGDSQYSAHPHH</sequence>
<organism>
    <name type="scientific">Ajellomyces dermatitidis (strain ER-3 / ATCC MYA-2586)</name>
    <name type="common">Blastomyces dermatitidis</name>
    <dbReference type="NCBI Taxonomy" id="559297"/>
    <lineage>
        <taxon>Eukaryota</taxon>
        <taxon>Fungi</taxon>
        <taxon>Dikarya</taxon>
        <taxon>Ascomycota</taxon>
        <taxon>Pezizomycotina</taxon>
        <taxon>Eurotiomycetes</taxon>
        <taxon>Eurotiomycetidae</taxon>
        <taxon>Onygenales</taxon>
        <taxon>Ajellomycetaceae</taxon>
        <taxon>Blastomyces</taxon>
    </lineage>
</organism>
<protein>
    <recommendedName>
        <fullName>Restriction of telomere capping protein 5</fullName>
    </recommendedName>
</protein>
<name>RTC5_AJEDR</name>
<comment type="function">
    <text evidence="1">May be involved in a process influencing telomere capping.</text>
</comment>
<comment type="subcellular location">
    <subcellularLocation>
        <location evidence="1">Cytoplasm</location>
    </subcellularLocation>
</comment>
<comment type="similarity">
    <text evidence="4">Belongs to the RTC5 family.</text>
</comment>
<accession>C5GFG2</accession>
<feature type="chain" id="PRO_0000408807" description="Restriction of telomere capping protein 5">
    <location>
        <begin position="1"/>
        <end position="691"/>
    </location>
</feature>
<feature type="domain" description="TLDc" evidence="2">
    <location>
        <begin position="366"/>
        <end position="614"/>
    </location>
</feature>
<feature type="region of interest" description="Disordered" evidence="3">
    <location>
        <begin position="329"/>
        <end position="355"/>
    </location>
</feature>
<feature type="region of interest" description="Disordered" evidence="3">
    <location>
        <begin position="559"/>
        <end position="595"/>
    </location>
</feature>
<feature type="compositionally biased region" description="Pro residues" evidence="3">
    <location>
        <begin position="341"/>
        <end position="355"/>
    </location>
</feature>
<feature type="compositionally biased region" description="Low complexity" evidence="3">
    <location>
        <begin position="561"/>
        <end position="595"/>
    </location>
</feature>
<dbReference type="EMBL" id="EQ999975">
    <property type="protein sequence ID" value="EEQ88035.1"/>
    <property type="molecule type" value="Genomic_DNA"/>
</dbReference>
<dbReference type="STRING" id="559297.C5GFG2"/>
<dbReference type="VEuPathDB" id="FungiDB:BDCG_03155"/>
<dbReference type="eggNOG" id="ENOG502QV3R">
    <property type="taxonomic scope" value="Eukaryota"/>
</dbReference>
<dbReference type="HOGENOM" id="CLU_011918_1_0_1"/>
<dbReference type="OMA" id="KWEFEAR"/>
<dbReference type="GO" id="GO:0005737">
    <property type="term" value="C:cytoplasm"/>
    <property type="evidence" value="ECO:0007669"/>
    <property type="project" value="UniProtKB-SubCell"/>
</dbReference>
<dbReference type="InterPro" id="IPR006571">
    <property type="entry name" value="TLDc_dom"/>
</dbReference>
<dbReference type="Pfam" id="PF07534">
    <property type="entry name" value="TLD"/>
    <property type="match status" value="1"/>
</dbReference>
<dbReference type="SMART" id="SM00584">
    <property type="entry name" value="TLDc"/>
    <property type="match status" value="1"/>
</dbReference>
<dbReference type="PROSITE" id="PS51886">
    <property type="entry name" value="TLDC"/>
    <property type="match status" value="1"/>
</dbReference>
<evidence type="ECO:0000250" key="1"/>
<evidence type="ECO:0000255" key="2">
    <source>
        <dbReference type="PROSITE-ProRule" id="PRU01234"/>
    </source>
</evidence>
<evidence type="ECO:0000256" key="3">
    <source>
        <dbReference type="SAM" id="MobiDB-lite"/>
    </source>
</evidence>
<evidence type="ECO:0000305" key="4"/>
<gene>
    <name type="primary">RTC5</name>
    <name type="ORF">BDCG_03155</name>
</gene>
<keyword id="KW-0963">Cytoplasm</keyword>
<reference key="1">
    <citation type="journal article" date="2015" name="PLoS Genet.">
        <title>The dynamic genome and transcriptome of the human fungal pathogen Blastomyces and close relative Emmonsia.</title>
        <authorList>
            <person name="Munoz J.F."/>
            <person name="Gauthier G.M."/>
            <person name="Desjardins C.A."/>
            <person name="Gallo J.E."/>
            <person name="Holder J."/>
            <person name="Sullivan T.D."/>
            <person name="Marty A.J."/>
            <person name="Carmen J.C."/>
            <person name="Chen Z."/>
            <person name="Ding L."/>
            <person name="Gujja S."/>
            <person name="Magrini V."/>
            <person name="Misas E."/>
            <person name="Mitreva M."/>
            <person name="Priest M."/>
            <person name="Saif S."/>
            <person name="Whiston E.A."/>
            <person name="Young S."/>
            <person name="Zeng Q."/>
            <person name="Goldman W.E."/>
            <person name="Mardis E.R."/>
            <person name="Taylor J.W."/>
            <person name="McEwen J.G."/>
            <person name="Clay O.K."/>
            <person name="Klein B.S."/>
            <person name="Cuomo C.A."/>
        </authorList>
    </citation>
    <scope>NUCLEOTIDE SEQUENCE [LARGE SCALE GENOMIC DNA]</scope>
    <source>
        <strain>ER-3 / ATCC MYA-2586</strain>
    </source>
</reference>